<proteinExistence type="inferred from homology"/>
<feature type="chain" id="PRO_0000296596" description="Large ribosomal subunit protein bL32">
    <location>
        <begin position="1"/>
        <end position="65"/>
    </location>
</feature>
<feature type="region of interest" description="Disordered" evidence="2">
    <location>
        <begin position="1"/>
        <end position="32"/>
    </location>
</feature>
<feature type="compositionally biased region" description="Basic residues" evidence="2">
    <location>
        <begin position="1"/>
        <end position="19"/>
    </location>
</feature>
<organism>
    <name type="scientific">Vesicomyosocius okutanii subsp. Calyptogena okutanii (strain HA)</name>
    <dbReference type="NCBI Taxonomy" id="412965"/>
    <lineage>
        <taxon>Bacteria</taxon>
        <taxon>Pseudomonadati</taxon>
        <taxon>Pseudomonadota</taxon>
        <taxon>Gammaproteobacteria</taxon>
        <taxon>Candidatus Pseudothioglobaceae</taxon>
        <taxon>Candidatus Vesicomyosocius</taxon>
    </lineage>
</organism>
<keyword id="KW-1185">Reference proteome</keyword>
<keyword id="KW-0687">Ribonucleoprotein</keyword>
<keyword id="KW-0689">Ribosomal protein</keyword>
<gene>
    <name evidence="1" type="primary">rpmF</name>
    <name type="ordered locus">COSY_0448</name>
</gene>
<protein>
    <recommendedName>
        <fullName evidence="1">Large ribosomal subunit protein bL32</fullName>
    </recommendedName>
    <alternativeName>
        <fullName evidence="3">50S ribosomal protein L32</fullName>
    </alternativeName>
</protein>
<comment type="similarity">
    <text evidence="1">Belongs to the bacterial ribosomal protein bL32 family.</text>
</comment>
<evidence type="ECO:0000255" key="1">
    <source>
        <dbReference type="HAMAP-Rule" id="MF_00340"/>
    </source>
</evidence>
<evidence type="ECO:0000256" key="2">
    <source>
        <dbReference type="SAM" id="MobiDB-lite"/>
    </source>
</evidence>
<evidence type="ECO:0000305" key="3"/>
<name>RL32_VESOH</name>
<accession>A5CWU9</accession>
<reference key="1">
    <citation type="journal article" date="2007" name="Curr. Biol.">
        <title>Reduced genome of the thioautotrophic intracellular symbiont in a deep-sea clam, Calyptogena okutanii.</title>
        <authorList>
            <person name="Kuwahara H."/>
            <person name="Yoshida T."/>
            <person name="Takaki Y."/>
            <person name="Shimamura S."/>
            <person name="Nishi S."/>
            <person name="Harada M."/>
            <person name="Matsuyama K."/>
            <person name="Takishita K."/>
            <person name="Kawato M."/>
            <person name="Uematsu K."/>
            <person name="Fujiwara Y."/>
            <person name="Sato T."/>
            <person name="Kato C."/>
            <person name="Kitagawa M."/>
            <person name="Kato I."/>
            <person name="Maruyama T."/>
        </authorList>
    </citation>
    <scope>NUCLEOTIDE SEQUENCE [LARGE SCALE GENOMIC DNA]</scope>
    <source>
        <strain>HA</strain>
    </source>
</reference>
<sequence length="65" mass="7465">MAVQKSRKTPSKRGMRRSHNALVKSTLSEDQETGEIHLRHHITTDGFYHGKKIINKVQNIQKINA</sequence>
<dbReference type="EMBL" id="AP009247">
    <property type="protein sequence ID" value="BAF61567.1"/>
    <property type="molecule type" value="Genomic_DNA"/>
</dbReference>
<dbReference type="RefSeq" id="WP_011929837.1">
    <property type="nucleotide sequence ID" value="NC_009465.1"/>
</dbReference>
<dbReference type="SMR" id="A5CWU9"/>
<dbReference type="STRING" id="412965.COSY_0448"/>
<dbReference type="KEGG" id="vok:COSY_0448"/>
<dbReference type="eggNOG" id="COG0333">
    <property type="taxonomic scope" value="Bacteria"/>
</dbReference>
<dbReference type="HOGENOM" id="CLU_129084_2_1_6"/>
<dbReference type="OrthoDB" id="9801927at2"/>
<dbReference type="Proteomes" id="UP000000247">
    <property type="component" value="Chromosome"/>
</dbReference>
<dbReference type="GO" id="GO:0015934">
    <property type="term" value="C:large ribosomal subunit"/>
    <property type="evidence" value="ECO:0007669"/>
    <property type="project" value="InterPro"/>
</dbReference>
<dbReference type="GO" id="GO:0003735">
    <property type="term" value="F:structural constituent of ribosome"/>
    <property type="evidence" value="ECO:0007669"/>
    <property type="project" value="InterPro"/>
</dbReference>
<dbReference type="GO" id="GO:0006412">
    <property type="term" value="P:translation"/>
    <property type="evidence" value="ECO:0007669"/>
    <property type="project" value="UniProtKB-UniRule"/>
</dbReference>
<dbReference type="HAMAP" id="MF_00340">
    <property type="entry name" value="Ribosomal_bL32"/>
    <property type="match status" value="1"/>
</dbReference>
<dbReference type="InterPro" id="IPR002677">
    <property type="entry name" value="Ribosomal_bL32"/>
</dbReference>
<dbReference type="InterPro" id="IPR044957">
    <property type="entry name" value="Ribosomal_bL32_bact"/>
</dbReference>
<dbReference type="InterPro" id="IPR011332">
    <property type="entry name" value="Ribosomal_zn-bd"/>
</dbReference>
<dbReference type="NCBIfam" id="TIGR01031">
    <property type="entry name" value="rpmF_bact"/>
    <property type="match status" value="1"/>
</dbReference>
<dbReference type="PANTHER" id="PTHR35534">
    <property type="entry name" value="50S RIBOSOMAL PROTEIN L32"/>
    <property type="match status" value="1"/>
</dbReference>
<dbReference type="PANTHER" id="PTHR35534:SF1">
    <property type="entry name" value="LARGE RIBOSOMAL SUBUNIT PROTEIN BL32"/>
    <property type="match status" value="1"/>
</dbReference>
<dbReference type="Pfam" id="PF01783">
    <property type="entry name" value="Ribosomal_L32p"/>
    <property type="match status" value="1"/>
</dbReference>
<dbReference type="SUPFAM" id="SSF57829">
    <property type="entry name" value="Zn-binding ribosomal proteins"/>
    <property type="match status" value="1"/>
</dbReference>